<feature type="signal peptide" evidence="1">
    <location>
        <begin position="1"/>
        <end position="23"/>
    </location>
</feature>
<feature type="peptide" id="PRO_0000019198" description="Ghrelin" evidence="1">
    <location>
        <begin position="24"/>
        <end position="50"/>
    </location>
</feature>
<feature type="propeptide" id="PRO_0000019199" description="Removed in mature form" evidence="1">
    <location>
        <begin position="51"/>
        <end position="74"/>
    </location>
</feature>
<feature type="peptide" id="PRO_0000045136" description="Obestatin" evidence="1">
    <location>
        <begin position="75"/>
        <end position="97"/>
    </location>
</feature>
<feature type="propeptide" id="PRO_0000045137" description="Removed in mature form" evidence="1">
    <location>
        <begin position="98"/>
        <end position="116"/>
    </location>
</feature>
<feature type="region of interest" description="Disordered" evidence="3">
    <location>
        <begin position="29"/>
        <end position="67"/>
    </location>
</feature>
<feature type="compositionally biased region" description="Basic and acidic residues" evidence="3">
    <location>
        <begin position="31"/>
        <end position="42"/>
    </location>
</feature>
<feature type="modified residue" description="Leucine amide" evidence="1">
    <location>
        <position position="97"/>
    </location>
</feature>
<feature type="lipid moiety-binding region" description="O-decanoyl serine; alternate" evidence="2">
    <location>
        <position position="26"/>
    </location>
</feature>
<feature type="lipid moiety-binding region" description="O-hexanoyl serine; alternate" evidence="2">
    <location>
        <position position="26"/>
    </location>
</feature>
<feature type="lipid moiety-binding region" description="O-octanoyl serine; alternate" evidence="2">
    <location>
        <position position="26"/>
    </location>
</feature>
<reference key="1">
    <citation type="submission" date="2002-07" db="EMBL/GenBank/DDBJ databases">
        <title>cDNA cloning of feline and caprine ghrelin.</title>
        <authorList>
            <person name="Lin X."/>
            <person name="Miyazato M."/>
            <person name="Kaiya H."/>
            <person name="Ida T."/>
            <person name="Kangawa K."/>
        </authorList>
    </citation>
    <scope>NUCLEOTIDE SEQUENCE [MRNA]</scope>
    <source>
        <tissue>Stomach</tissue>
    </source>
</reference>
<name>GHRL_CAPHI</name>
<comment type="function">
    <molecule>Ghrelin</molecule>
    <text evidence="1">Ghrelin is the ligand for growth hormone secretagogue receptor type 1 (GHSR). Induces the release of growth hormone from the pituitary. Has an appetite-stimulating effect, induces adiposity and stimulates gastric acid secretion. Involved in growth regulation (By similarity).</text>
</comment>
<comment type="function">
    <molecule>Obestatin</molecule>
    <text evidence="1">Obestatin may be the ligand for GPR39. May have an appetite-reducing effect resulting in decreased food intake. May reduce gastric emptying activity and jejunal motility (By similarity).</text>
</comment>
<comment type="subcellular location">
    <subcellularLocation>
        <location>Secreted</location>
    </subcellularLocation>
</comment>
<comment type="PTM">
    <text evidence="1 2">O-octanoylated by GOAT/MBOAT4 (By similarity). O-octanoylation is essential for ghrelin activity.</text>
</comment>
<comment type="PTM">
    <text evidence="1">Amidation of Leu-97 is essential for obestatin activity.</text>
</comment>
<comment type="similarity">
    <text evidence="4">Belongs to the motilin family.</text>
</comment>
<comment type="online information" name="Protein Spotlight">
    <link uri="https://www.proteinspotlight.org/back_issues/066"/>
    <text>Gut feelings - Issue 66 of January 2006</text>
</comment>
<dbReference type="EMBL" id="AB089200">
    <property type="protein sequence ID" value="BAD34669.1"/>
    <property type="molecule type" value="mRNA"/>
</dbReference>
<dbReference type="RefSeq" id="XP_017893717.1">
    <property type="nucleotide sequence ID" value="XM_018038228.1"/>
</dbReference>
<dbReference type="STRING" id="9925.ENSCHIP00000018945"/>
<dbReference type="Ensembl" id="ENSCHIT00000026752.1">
    <property type="protein sequence ID" value="ENSCHIP00000018937.1"/>
    <property type="gene ID" value="ENSCHIG00000018149.1"/>
</dbReference>
<dbReference type="Ensembl" id="ENSCHIT00010040542.1">
    <property type="protein sequence ID" value="ENSCHIP00010028713.1"/>
    <property type="gene ID" value="ENSCHIG00010021452.1"/>
</dbReference>
<dbReference type="Ensembl" id="ENSCHIT00020061783">
    <property type="protein sequence ID" value="ENSCHIP00020047582"/>
    <property type="gene ID" value="ENSCHIG00020029866"/>
</dbReference>
<dbReference type="Ensembl" id="ENSCHIT00040035928">
    <property type="protein sequence ID" value="ENSCHIP00040028850"/>
    <property type="gene ID" value="ENSCHIG00040016500"/>
</dbReference>
<dbReference type="GeneID" id="100861189"/>
<dbReference type="KEGG" id="chx:100861189"/>
<dbReference type="CTD" id="51738"/>
<dbReference type="GeneTree" id="ENSGT00390000004064"/>
<dbReference type="OMA" id="QYQQYGR"/>
<dbReference type="OrthoDB" id="9896247at2759"/>
<dbReference type="Proteomes" id="UP000291000">
    <property type="component" value="Chromosome 22"/>
</dbReference>
<dbReference type="Proteomes" id="UP000694566">
    <property type="component" value="Chromosome 22"/>
</dbReference>
<dbReference type="Bgee" id="ENSCHIG00000018149">
    <property type="expression patterns" value="Expressed in descending colon and 3 other cell types or tissues"/>
</dbReference>
<dbReference type="GO" id="GO:0030424">
    <property type="term" value="C:axon"/>
    <property type="evidence" value="ECO:0000250"/>
    <property type="project" value="UniProtKB"/>
</dbReference>
<dbReference type="GO" id="GO:0005576">
    <property type="term" value="C:extracellular region"/>
    <property type="evidence" value="ECO:0000250"/>
    <property type="project" value="UniProtKB"/>
</dbReference>
<dbReference type="GO" id="GO:0005615">
    <property type="term" value="C:extracellular space"/>
    <property type="evidence" value="ECO:0000250"/>
    <property type="project" value="UniProtKB"/>
</dbReference>
<dbReference type="GO" id="GO:0031768">
    <property type="term" value="F:ghrelin receptor binding"/>
    <property type="evidence" value="ECO:0000250"/>
    <property type="project" value="UniProtKB"/>
</dbReference>
<dbReference type="GO" id="GO:0016608">
    <property type="term" value="F:growth hormone-releasing hormone activity"/>
    <property type="evidence" value="ECO:0000250"/>
    <property type="project" value="UniProtKB"/>
</dbReference>
<dbReference type="GO" id="GO:0005179">
    <property type="term" value="F:hormone activity"/>
    <property type="evidence" value="ECO:0000250"/>
    <property type="project" value="UniProtKB"/>
</dbReference>
<dbReference type="GO" id="GO:0030296">
    <property type="term" value="F:protein tyrosine kinase activator activity"/>
    <property type="evidence" value="ECO:0000250"/>
    <property type="project" value="UniProtKB"/>
</dbReference>
<dbReference type="GO" id="GO:0008154">
    <property type="term" value="P:actin polymerization or depolymerization"/>
    <property type="evidence" value="ECO:0000250"/>
    <property type="project" value="UniProtKB"/>
</dbReference>
<dbReference type="GO" id="GO:0046697">
    <property type="term" value="P:decidualization"/>
    <property type="evidence" value="ECO:0000250"/>
    <property type="project" value="UniProtKB"/>
</dbReference>
<dbReference type="GO" id="GO:0016358">
    <property type="term" value="P:dendrite development"/>
    <property type="evidence" value="ECO:0000250"/>
    <property type="project" value="UniProtKB"/>
</dbReference>
<dbReference type="GO" id="GO:0001696">
    <property type="term" value="P:gastric acid secretion"/>
    <property type="evidence" value="ECO:0007669"/>
    <property type="project" value="TreeGrafter"/>
</dbReference>
<dbReference type="GO" id="GO:0043066">
    <property type="term" value="P:negative regulation of apoptotic process"/>
    <property type="evidence" value="ECO:0000250"/>
    <property type="project" value="UniProtKB"/>
</dbReference>
<dbReference type="GO" id="GO:0001937">
    <property type="term" value="P:negative regulation of endothelial cell proliferation"/>
    <property type="evidence" value="ECO:0000250"/>
    <property type="project" value="UniProtKB"/>
</dbReference>
<dbReference type="GO" id="GO:0050728">
    <property type="term" value="P:negative regulation of inflammatory response"/>
    <property type="evidence" value="ECO:0000250"/>
    <property type="project" value="UniProtKB"/>
</dbReference>
<dbReference type="GO" id="GO:0046676">
    <property type="term" value="P:negative regulation of insulin secretion"/>
    <property type="evidence" value="ECO:0000250"/>
    <property type="project" value="UniProtKB"/>
</dbReference>
<dbReference type="GO" id="GO:0032691">
    <property type="term" value="P:negative regulation of interleukin-1 beta production"/>
    <property type="evidence" value="ECO:0000250"/>
    <property type="project" value="UniProtKB"/>
</dbReference>
<dbReference type="GO" id="GO:0032715">
    <property type="term" value="P:negative regulation of interleukin-6 production"/>
    <property type="evidence" value="ECO:0000250"/>
    <property type="project" value="UniProtKB"/>
</dbReference>
<dbReference type="GO" id="GO:0032720">
    <property type="term" value="P:negative regulation of tumor necrosis factor production"/>
    <property type="evidence" value="ECO:0000250"/>
    <property type="project" value="UniProtKB"/>
</dbReference>
<dbReference type="GO" id="GO:0007204">
    <property type="term" value="P:positive regulation of cytosolic calcium ion concentration"/>
    <property type="evidence" value="ECO:0000250"/>
    <property type="project" value="UniProtKB"/>
</dbReference>
<dbReference type="GO" id="GO:0060124">
    <property type="term" value="P:positive regulation of growth hormone secretion"/>
    <property type="evidence" value="ECO:0007669"/>
    <property type="project" value="TreeGrafter"/>
</dbReference>
<dbReference type="GO" id="GO:0032024">
    <property type="term" value="P:positive regulation of insulin secretion"/>
    <property type="evidence" value="ECO:0000250"/>
    <property type="project" value="UniProtKB"/>
</dbReference>
<dbReference type="GO" id="GO:0043410">
    <property type="term" value="P:positive regulation of MAPK cascade"/>
    <property type="evidence" value="ECO:0000250"/>
    <property type="project" value="UniProtKB"/>
</dbReference>
<dbReference type="GO" id="GO:0032097">
    <property type="term" value="P:positive regulation of response to food"/>
    <property type="evidence" value="ECO:0000250"/>
    <property type="project" value="UniProtKB"/>
</dbReference>
<dbReference type="GO" id="GO:0051965">
    <property type="term" value="P:positive regulation of synapse assembly"/>
    <property type="evidence" value="ECO:0000250"/>
    <property type="project" value="UniProtKB"/>
</dbReference>
<dbReference type="GO" id="GO:0042127">
    <property type="term" value="P:regulation of cell population proliferation"/>
    <property type="evidence" value="ECO:0000250"/>
    <property type="project" value="UniProtKB"/>
</dbReference>
<dbReference type="GO" id="GO:0032095">
    <property type="term" value="P:regulation of response to food"/>
    <property type="evidence" value="ECO:0000250"/>
    <property type="project" value="UniProtKB"/>
</dbReference>
<dbReference type="GO" id="GO:0043627">
    <property type="term" value="P:response to estrogen"/>
    <property type="evidence" value="ECO:0000250"/>
    <property type="project" value="UniProtKB"/>
</dbReference>
<dbReference type="GO" id="GO:0009725">
    <property type="term" value="P:response to hormone"/>
    <property type="evidence" value="ECO:0000250"/>
    <property type="project" value="UniProtKB"/>
</dbReference>
<dbReference type="InterPro" id="IPR006737">
    <property type="entry name" value="Motilin_assoc"/>
</dbReference>
<dbReference type="InterPro" id="IPR006738">
    <property type="entry name" value="Motilin_ghrelin"/>
</dbReference>
<dbReference type="InterPro" id="IPR005441">
    <property type="entry name" value="Preproghrelin"/>
</dbReference>
<dbReference type="PANTHER" id="PTHR14122:SF1">
    <property type="entry name" value="APPETITE-REGULATING HORMONE"/>
    <property type="match status" value="1"/>
</dbReference>
<dbReference type="PANTHER" id="PTHR14122">
    <property type="entry name" value="GHRELIN PRECURSOR"/>
    <property type="match status" value="1"/>
</dbReference>
<dbReference type="Pfam" id="PF04643">
    <property type="entry name" value="Motilin_assoc"/>
    <property type="match status" value="1"/>
</dbReference>
<dbReference type="Pfam" id="PF04644">
    <property type="entry name" value="Motilin_ghrelin"/>
    <property type="match status" value="1"/>
</dbReference>
<dbReference type="PRINTS" id="PR01624">
    <property type="entry name" value="GHRELIN"/>
</dbReference>
<gene>
    <name type="primary">GHRL</name>
</gene>
<evidence type="ECO:0000250" key="1"/>
<evidence type="ECO:0000250" key="2">
    <source>
        <dbReference type="UniProtKB" id="Q9EQX0"/>
    </source>
</evidence>
<evidence type="ECO:0000256" key="3">
    <source>
        <dbReference type="SAM" id="MobiDB-lite"/>
    </source>
</evidence>
<evidence type="ECO:0000305" key="4"/>
<proteinExistence type="inferred from homology"/>
<accession>Q6BEG7</accession>
<sequence>MPAPRTICSLLLLSMLWMDLAMAGSSFLSPEHQKLQRKEPKKPSGRLKPRALEGQFDPDVGSQEEGAEDELEIRFNAPFNIGIKLSGAQSLQHGQTLGKFLQDILWEEAEETLADE</sequence>
<protein>
    <recommendedName>
        <fullName>Appetite-regulating hormone</fullName>
    </recommendedName>
    <alternativeName>
        <fullName>Growth hormone secretagogue</fullName>
    </alternativeName>
    <alternativeName>
        <fullName>Growth hormone-releasing peptide</fullName>
    </alternativeName>
    <alternativeName>
        <fullName>Motilin-related peptide</fullName>
    </alternativeName>
    <component>
        <recommendedName>
            <fullName>Ghrelin</fullName>
        </recommendedName>
    </component>
    <component>
        <recommendedName>
            <fullName>Obestatin</fullName>
        </recommendedName>
    </component>
</protein>
<keyword id="KW-0027">Amidation</keyword>
<keyword id="KW-0372">Hormone</keyword>
<keyword id="KW-0449">Lipoprotein</keyword>
<keyword id="KW-1185">Reference proteome</keyword>
<keyword id="KW-0964">Secreted</keyword>
<keyword id="KW-0732">Signal</keyword>
<organism>
    <name type="scientific">Capra hircus</name>
    <name type="common">Goat</name>
    <dbReference type="NCBI Taxonomy" id="9925"/>
    <lineage>
        <taxon>Eukaryota</taxon>
        <taxon>Metazoa</taxon>
        <taxon>Chordata</taxon>
        <taxon>Craniata</taxon>
        <taxon>Vertebrata</taxon>
        <taxon>Euteleostomi</taxon>
        <taxon>Mammalia</taxon>
        <taxon>Eutheria</taxon>
        <taxon>Laurasiatheria</taxon>
        <taxon>Artiodactyla</taxon>
        <taxon>Ruminantia</taxon>
        <taxon>Pecora</taxon>
        <taxon>Bovidae</taxon>
        <taxon>Caprinae</taxon>
        <taxon>Capra</taxon>
    </lineage>
</organism>